<gene>
    <name type="ordered locus">MmarC7_0670</name>
</gene>
<feature type="chain" id="PRO_0000365309" description="tRNA (cytidine(56)-2'-O)-methyltransferase">
    <location>
        <begin position="1"/>
        <end position="179"/>
    </location>
</feature>
<feature type="binding site" evidence="1">
    <location>
        <position position="82"/>
    </location>
    <ligand>
        <name>S-adenosyl-L-methionine</name>
        <dbReference type="ChEBI" id="CHEBI:59789"/>
    </ligand>
</feature>
<feature type="binding site" evidence="1">
    <location>
        <begin position="112"/>
        <end position="116"/>
    </location>
    <ligand>
        <name>S-adenosyl-L-methionine</name>
        <dbReference type="ChEBI" id="CHEBI:59789"/>
    </ligand>
</feature>
<feature type="binding site" evidence="1">
    <location>
        <begin position="130"/>
        <end position="137"/>
    </location>
    <ligand>
        <name>S-adenosyl-L-methionine</name>
        <dbReference type="ChEBI" id="CHEBI:59789"/>
    </ligand>
</feature>
<keyword id="KW-0963">Cytoplasm</keyword>
<keyword id="KW-0489">Methyltransferase</keyword>
<keyword id="KW-0949">S-adenosyl-L-methionine</keyword>
<keyword id="KW-0808">Transferase</keyword>
<keyword id="KW-0819">tRNA processing</keyword>
<comment type="function">
    <text evidence="1">Specifically catalyzes the AdoMet-dependent 2'-O-ribose methylation of cytidine at position 56 in tRNAs.</text>
</comment>
<comment type="catalytic activity">
    <reaction evidence="1">
        <text>cytidine(56) in tRNA + S-adenosyl-L-methionine = 2'-O-methylcytidine(56) in tRNA + S-adenosyl-L-homocysteine + H(+)</text>
        <dbReference type="Rhea" id="RHEA:42968"/>
        <dbReference type="Rhea" id="RHEA-COMP:10308"/>
        <dbReference type="Rhea" id="RHEA-COMP:10309"/>
        <dbReference type="ChEBI" id="CHEBI:15378"/>
        <dbReference type="ChEBI" id="CHEBI:57856"/>
        <dbReference type="ChEBI" id="CHEBI:59789"/>
        <dbReference type="ChEBI" id="CHEBI:74495"/>
        <dbReference type="ChEBI" id="CHEBI:82748"/>
        <dbReference type="EC" id="2.1.1.206"/>
    </reaction>
</comment>
<comment type="subunit">
    <text evidence="1">Homodimer.</text>
</comment>
<comment type="subcellular location">
    <subcellularLocation>
        <location evidence="1">Cytoplasm</location>
    </subcellularLocation>
</comment>
<comment type="similarity">
    <text evidence="1">Belongs to the aTrm56 family.</text>
</comment>
<evidence type="ECO:0000255" key="1">
    <source>
        <dbReference type="HAMAP-Rule" id="MF_00077"/>
    </source>
</evidence>
<proteinExistence type="inferred from homology"/>
<sequence>MAIEILRLGHRGERDKRISTHVALTSRALGAEKIIFTEDDKHVKESVERIVESWGGEFKFEVVKSWRTYTRRFKDNGIVVHLTMYGENINKIMTEIREDISKTNKNLLLIIGAEKVPREAYDLADYNLSVGNQPHSEVAALAIFLDRLTEGKTLYSEYDDAKIKVTPSKSEKCVFVEKD</sequence>
<organism>
    <name type="scientific">Methanococcus maripaludis (strain C7 / ATCC BAA-1331)</name>
    <dbReference type="NCBI Taxonomy" id="426368"/>
    <lineage>
        <taxon>Archaea</taxon>
        <taxon>Methanobacteriati</taxon>
        <taxon>Methanobacteriota</taxon>
        <taxon>Methanomada group</taxon>
        <taxon>Methanococci</taxon>
        <taxon>Methanococcales</taxon>
        <taxon>Methanococcaceae</taxon>
        <taxon>Methanococcus</taxon>
    </lineage>
</organism>
<protein>
    <recommendedName>
        <fullName evidence="1">tRNA (cytidine(56)-2'-O)-methyltransferase</fullName>
        <ecNumber evidence="1">2.1.1.206</ecNumber>
    </recommendedName>
    <alternativeName>
        <fullName evidence="1">tRNA ribose 2'-O-methyltransferase aTrm56</fullName>
    </alternativeName>
</protein>
<reference key="1">
    <citation type="submission" date="2007-06" db="EMBL/GenBank/DDBJ databases">
        <title>Complete sequence of Methanococcus maripaludis C7.</title>
        <authorList>
            <consortium name="US DOE Joint Genome Institute"/>
            <person name="Copeland A."/>
            <person name="Lucas S."/>
            <person name="Lapidus A."/>
            <person name="Barry K."/>
            <person name="Glavina del Rio T."/>
            <person name="Dalin E."/>
            <person name="Tice H."/>
            <person name="Pitluck S."/>
            <person name="Clum A."/>
            <person name="Schmutz J."/>
            <person name="Larimer F."/>
            <person name="Land M."/>
            <person name="Hauser L."/>
            <person name="Kyrpides N."/>
            <person name="Anderson I."/>
            <person name="Sieprawska-Lupa M."/>
            <person name="Whitman W.B."/>
            <person name="Richardson P."/>
        </authorList>
    </citation>
    <scope>NUCLEOTIDE SEQUENCE [LARGE SCALE GENOMIC DNA]</scope>
    <source>
        <strain>C7 / ATCC BAA-1331</strain>
    </source>
</reference>
<accession>A6VH11</accession>
<name>TRM56_METM7</name>
<dbReference type="EC" id="2.1.1.206" evidence="1"/>
<dbReference type="EMBL" id="CP000745">
    <property type="protein sequence ID" value="ABR65737.1"/>
    <property type="molecule type" value="Genomic_DNA"/>
</dbReference>
<dbReference type="SMR" id="A6VH11"/>
<dbReference type="STRING" id="426368.MmarC7_0670"/>
<dbReference type="KEGG" id="mmz:MmarC7_0670"/>
<dbReference type="eggNOG" id="arCOG01857">
    <property type="taxonomic scope" value="Archaea"/>
</dbReference>
<dbReference type="HOGENOM" id="CLU_123709_0_0_2"/>
<dbReference type="OrthoDB" id="14397at2157"/>
<dbReference type="GO" id="GO:0005737">
    <property type="term" value="C:cytoplasm"/>
    <property type="evidence" value="ECO:0007669"/>
    <property type="project" value="UniProtKB-SubCell"/>
</dbReference>
<dbReference type="GO" id="GO:0106059">
    <property type="term" value="F:tRNA (cytidine(56)-2'-O)-methyltransferase activity"/>
    <property type="evidence" value="ECO:0007669"/>
    <property type="project" value="UniProtKB-EC"/>
</dbReference>
<dbReference type="GO" id="GO:0002128">
    <property type="term" value="P:tRNA nucleoside ribose methylation"/>
    <property type="evidence" value="ECO:0007669"/>
    <property type="project" value="UniProtKB-UniRule"/>
</dbReference>
<dbReference type="CDD" id="cd18083">
    <property type="entry name" value="aTrm56-like"/>
    <property type="match status" value="1"/>
</dbReference>
<dbReference type="Gene3D" id="3.40.1280.10">
    <property type="match status" value="1"/>
</dbReference>
<dbReference type="HAMAP" id="MF_00077">
    <property type="entry name" value="tRNA_methyltr_aTrm56"/>
    <property type="match status" value="1"/>
</dbReference>
<dbReference type="InterPro" id="IPR029028">
    <property type="entry name" value="Alpha/beta_knot_MTases"/>
</dbReference>
<dbReference type="InterPro" id="IPR029026">
    <property type="entry name" value="tRNA_m1G_MTases_N"/>
</dbReference>
<dbReference type="InterPro" id="IPR002845">
    <property type="entry name" value="tRNA_mtfrase_aTrm56"/>
</dbReference>
<dbReference type="NCBIfam" id="NF003048">
    <property type="entry name" value="PRK03958.1"/>
    <property type="match status" value="1"/>
</dbReference>
<dbReference type="PANTHER" id="PTHR42197">
    <property type="entry name" value="TRNA (CYTIDINE(56)-2'-O)-METHYLTRANSFERASE"/>
    <property type="match status" value="1"/>
</dbReference>
<dbReference type="PANTHER" id="PTHR42197:SF1">
    <property type="entry name" value="TRNA (CYTIDINE(56)-2'-O)-METHYLTRANSFERASE"/>
    <property type="match status" value="1"/>
</dbReference>
<dbReference type="Pfam" id="PF01994">
    <property type="entry name" value="Trm56"/>
    <property type="match status" value="1"/>
</dbReference>
<dbReference type="PIRSF" id="PIRSF016123">
    <property type="entry name" value="UCP016123"/>
    <property type="match status" value="1"/>
</dbReference>
<dbReference type="SUPFAM" id="SSF75217">
    <property type="entry name" value="alpha/beta knot"/>
    <property type="match status" value="1"/>
</dbReference>